<name>PPK5_MASDA</name>
<dbReference type="GO" id="GO:0005576">
    <property type="term" value="C:extracellular region"/>
    <property type="evidence" value="ECO:0007669"/>
    <property type="project" value="UniProtKB-SubCell"/>
</dbReference>
<dbReference type="GO" id="GO:0005184">
    <property type="term" value="F:neuropeptide hormone activity"/>
    <property type="evidence" value="ECO:0007669"/>
    <property type="project" value="InterPro"/>
</dbReference>
<dbReference type="GO" id="GO:0007218">
    <property type="term" value="P:neuropeptide signaling pathway"/>
    <property type="evidence" value="ECO:0007669"/>
    <property type="project" value="UniProtKB-KW"/>
</dbReference>
<dbReference type="InterPro" id="IPR001484">
    <property type="entry name" value="Pyrokinin_CS"/>
</dbReference>
<dbReference type="PROSITE" id="PS00539">
    <property type="entry name" value="PYROKININ"/>
    <property type="match status" value="1"/>
</dbReference>
<evidence type="ECO:0000250" key="1">
    <source>
        <dbReference type="UniProtKB" id="P82617"/>
    </source>
</evidence>
<evidence type="ECO:0000255" key="2"/>
<evidence type="ECO:0000269" key="3">
    <source>
    </source>
</evidence>
<evidence type="ECO:0000303" key="4">
    <source>
    </source>
</evidence>
<evidence type="ECO:0000305" key="5"/>
<sequence>GGSGSGETSGMWFGPRL</sequence>
<protein>
    <recommendedName>
        <fullName evidence="1">Pyrokinin-5</fullName>
    </recommendedName>
    <alternativeName>
        <fullName evidence="1">FXPRL-amide</fullName>
    </alternativeName>
    <alternativeName>
        <fullName evidence="4">MasDa-Capa-PK</fullName>
    </alternativeName>
</protein>
<comment type="function">
    <text evidence="1">Myoactive.</text>
</comment>
<comment type="subcellular location">
    <subcellularLocation>
        <location evidence="5">Secreted</location>
    </subcellularLocation>
</comment>
<comment type="similarity">
    <text evidence="2">Belongs to the pyrokinin family.</text>
</comment>
<organism>
    <name type="scientific">Mastotermes darwiniensis</name>
    <name type="common">Giant northern termite</name>
    <dbReference type="NCBI Taxonomy" id="13139"/>
    <lineage>
        <taxon>Eukaryota</taxon>
        <taxon>Metazoa</taxon>
        <taxon>Ecdysozoa</taxon>
        <taxon>Arthropoda</taxon>
        <taxon>Hexapoda</taxon>
        <taxon>Insecta</taxon>
        <taxon>Pterygota</taxon>
        <taxon>Neoptera</taxon>
        <taxon>Polyneoptera</taxon>
        <taxon>Dictyoptera</taxon>
        <taxon>Blattodea</taxon>
        <taxon>Blattoidea</taxon>
        <taxon>Termitoidae</taxon>
        <taxon>Mastotermitidae</taxon>
        <taxon>Mastotermes</taxon>
    </lineage>
</organism>
<keyword id="KW-0027">Amidation</keyword>
<keyword id="KW-0903">Direct protein sequencing</keyword>
<keyword id="KW-0527">Neuropeptide</keyword>
<keyword id="KW-0964">Secreted</keyword>
<proteinExistence type="evidence at protein level"/>
<feature type="peptide" id="PRO_0000378705" description="Pyrokinin-5" evidence="3">
    <location>
        <begin position="1"/>
        <end position="17"/>
    </location>
</feature>
<feature type="modified residue" description="Leucine amide" evidence="3">
    <location>
        <position position="17"/>
    </location>
</feature>
<accession>P85681</accession>
<reference evidence="5" key="1">
    <citation type="journal article" date="2009" name="BMC Evol. Biol.">
        <title>A proteomic approach for studying insect phylogeny: CAPA peptides of ancient insect taxa (Dictyoptera, Blattoptera) as a test case.</title>
        <authorList>
            <person name="Roth S."/>
            <person name="Fromm B."/>
            <person name="Gaede G."/>
            <person name="Predel R."/>
        </authorList>
    </citation>
    <scope>PROTEIN SEQUENCE</scope>
    <scope>AMIDATION AT LEU-17</scope>
    <source>
        <tissue evidence="3">Abdominal perisympathetic organs</tissue>
    </source>
</reference>